<name>PHNE1_ECOLI</name>
<reference key="1">
    <citation type="journal article" date="1991" name="J. Bacteriol.">
        <title>Molecular analysis of the cryptic and functional phn operons for phosphonate use in Escherichia coli K-12.</title>
        <authorList>
            <person name="Makino K."/>
            <person name="Kim S.K."/>
            <person name="Shinagawa H."/>
            <person name="Amemura M."/>
            <person name="Nakata A."/>
        </authorList>
    </citation>
    <scope>NUCLEOTIDE SEQUENCE [GENOMIC DNA]</scope>
    <scope>IDENTIFICATION OF MUTATION</scope>
    <source>
        <strain>K12 / W3110</strain>
    </source>
</reference>
<reference key="2">
    <citation type="journal article" date="1995" name="Nucleic Acids Res.">
        <title>Analysis of the Escherichia coli genome VI: DNA sequence of the region from 92.8 through 100 minutes.</title>
        <authorList>
            <person name="Burland V.D."/>
            <person name="Plunkett G. III"/>
            <person name="Sofia H.J."/>
            <person name="Daniels D.L."/>
            <person name="Blattner F.R."/>
        </authorList>
    </citation>
    <scope>NUCLEOTIDE SEQUENCE [LARGE SCALE GENOMIC DNA]</scope>
    <source>
        <strain>K12 / MG1655 / ATCC 47076</strain>
    </source>
</reference>
<reference key="3">
    <citation type="journal article" date="1997" name="Science">
        <title>The complete genome sequence of Escherichia coli K-12.</title>
        <authorList>
            <person name="Blattner F.R."/>
            <person name="Plunkett G. III"/>
            <person name="Bloch C.A."/>
            <person name="Perna N.T."/>
            <person name="Burland V."/>
            <person name="Riley M."/>
            <person name="Collado-Vides J."/>
            <person name="Glasner J.D."/>
            <person name="Rode C.K."/>
            <person name="Mayhew G.F."/>
            <person name="Gregor J."/>
            <person name="Davis N.W."/>
            <person name="Kirkpatrick H.A."/>
            <person name="Goeden M.A."/>
            <person name="Rose D.J."/>
            <person name="Mau B."/>
            <person name="Shao Y."/>
        </authorList>
    </citation>
    <scope>NUCLEOTIDE SEQUENCE [LARGE SCALE GENOMIC DNA]</scope>
    <source>
        <strain>K12 / MG1655 / ATCC 47076</strain>
    </source>
</reference>
<reference key="4">
    <citation type="journal article" date="2006" name="Mol. Syst. Biol.">
        <title>Highly accurate genome sequences of Escherichia coli K-12 strains MG1655 and W3110.</title>
        <authorList>
            <person name="Hayashi K."/>
            <person name="Morooka N."/>
            <person name="Yamamoto Y."/>
            <person name="Fujita K."/>
            <person name="Isono K."/>
            <person name="Choi S."/>
            <person name="Ohtsubo E."/>
            <person name="Baba T."/>
            <person name="Wanner B.L."/>
            <person name="Mori H."/>
            <person name="Horiuchi T."/>
        </authorList>
    </citation>
    <scope>NUCLEOTIDE SEQUENCE [LARGE SCALE GENOMIC DNA]</scope>
    <source>
        <strain>K12 / W3110 / ATCC 27325 / DSM 5911</strain>
    </source>
</reference>
<reference key="5">
    <citation type="journal article" date="1990" name="J. Bacteriol.">
        <title>Mapping and molecular cloning of the phn (psiD) locus for phosphonate utilization in Escherichia coli.</title>
        <authorList>
            <person name="Wanner B.L."/>
            <person name="Boline J.A."/>
        </authorList>
    </citation>
    <scope>CRYPTIC FUNCTION</scope>
</reference>
<proteinExistence type="uncertain"/>
<protein>
    <recommendedName>
        <fullName>Putative cryptic phosphonate transport system permease protein PhnE1</fullName>
    </recommendedName>
</protein>
<comment type="function">
    <text evidence="4">N-terminal fragment of the PhnE protein, part of a phosphonate usage operon that is cryptic in K12 strains. Growth of K12 strains on phosphonate can be observed when it is used as the sole phosphorus source after a 60 hour lag period, suggesting the operon is activated (PubMed:2155195). An intact PhnE in strain B is (AC A0A140NFA3). Part of the binding-protein-dependent transport system for phosphonates; probably responsible for the translocation of the substrate across the membrane (Probable).</text>
</comment>
<comment type="subunit">
    <text evidence="3">If the reading frame is restored, the complex is composed of two ATP-binding proteins (PhnC), two transmembrane proteins (PhnE) and a solute-binding protein (PhnD) (Probable).</text>
</comment>
<comment type="subcellular location">
    <subcellularLocation>
        <location evidence="1">Cell inner membrane</location>
        <topology evidence="1">Multi-pass membrane protein</topology>
    </subcellularLocation>
</comment>
<comment type="caution">
    <text evidence="2">Could be the product of a pseudogene. In K12 strains the phnE gene has an 8-bp insertion, absent from the strain B gene, which causes a frameshift mutation (PubMed:1840580). In 8 K12 derivatives selected for their ability to grow on phosphonate this repeat is no longer present, which restores an intact PhnE open reading frame (PubMed:1840580).</text>
</comment>
<comment type="sequence caution">
    <conflict type="erroneous initiation">
        <sequence resource="EMBL-CDS" id="BAA14264"/>
    </conflict>
    <text>Truncated N-terminus.</text>
</comment>
<dbReference type="EMBL" id="D90227">
    <property type="protein sequence ID" value="BAA14264.1"/>
    <property type="status" value="ALT_INIT"/>
    <property type="molecule type" value="Genomic_DNA"/>
</dbReference>
<dbReference type="EMBL" id="U14003">
    <property type="protein sequence ID" value="AAA97003.1"/>
    <property type="molecule type" value="Genomic_DNA"/>
</dbReference>
<dbReference type="EMBL" id="AP009048">
    <property type="protein sequence ID" value="BAE78106.1"/>
    <property type="molecule type" value="Genomic_DNA"/>
</dbReference>
<dbReference type="EMBL" id="U00096">
    <property type="status" value="NOT_ANNOTATED_CDS"/>
    <property type="molecule type" value="Genomic_DNA"/>
</dbReference>
<dbReference type="PIR" id="F35718">
    <property type="entry name" value="F35718"/>
</dbReference>
<dbReference type="FunCoup" id="P0DP69">
    <property type="interactions" value="38"/>
</dbReference>
<dbReference type="HOGENOM" id="CLU_092815_0_0_6"/>
<dbReference type="InParanoid" id="P0DP69"/>
<dbReference type="Proteomes" id="UP000000625">
    <property type="component" value="Chromosome"/>
</dbReference>
<dbReference type="GO" id="GO:0005886">
    <property type="term" value="C:plasma membrane"/>
    <property type="evidence" value="ECO:0007669"/>
    <property type="project" value="UniProtKB-SubCell"/>
</dbReference>
<dbReference type="GO" id="GO:0015716">
    <property type="term" value="P:organic phosphonate transport"/>
    <property type="evidence" value="ECO:0007669"/>
    <property type="project" value="UniProtKB-KW"/>
</dbReference>
<dbReference type="GO" id="GO:0055085">
    <property type="term" value="P:transmembrane transport"/>
    <property type="evidence" value="ECO:0007669"/>
    <property type="project" value="InterPro"/>
</dbReference>
<dbReference type="CDD" id="cd06261">
    <property type="entry name" value="TM_PBP2"/>
    <property type="match status" value="1"/>
</dbReference>
<dbReference type="Gene3D" id="1.10.3720.10">
    <property type="entry name" value="MetI-like"/>
    <property type="match status" value="1"/>
</dbReference>
<dbReference type="InterPro" id="IPR000515">
    <property type="entry name" value="MetI-like"/>
</dbReference>
<dbReference type="InterPro" id="IPR035906">
    <property type="entry name" value="MetI-like_sf"/>
</dbReference>
<dbReference type="PANTHER" id="PTHR30043:SF1">
    <property type="entry name" value="ABC TRANSPORT SYSTEM PERMEASE PROTEIN P69"/>
    <property type="match status" value="1"/>
</dbReference>
<dbReference type="PANTHER" id="PTHR30043">
    <property type="entry name" value="PHOSPHONATES TRANSPORT SYSTEM PERMEASE PROTEIN"/>
    <property type="match status" value="1"/>
</dbReference>
<dbReference type="SUPFAM" id="SSF161098">
    <property type="entry name" value="MetI-like"/>
    <property type="match status" value="1"/>
</dbReference>
<evidence type="ECO:0000255" key="1"/>
<evidence type="ECO:0000269" key="2">
    <source>
    </source>
</evidence>
<evidence type="ECO:0000305" key="3"/>
<evidence type="ECO:0000305" key="4">
    <source>
    </source>
</evidence>
<sequence>MPDAVQAPYPAYRPEPNMQTITIAPPKRSWFSLLSWAVVLAVLVVSWQGAEMAPLTLIKDGGNMATFAADFFPPDFSQWQDYLTEMAVTLQIAVWGTALAVVLSIPFGLMSAENLVPWWVYQPVRRLMDACRAINEMVFAMLFVVAVGLGPFAGVLACWRCLSTPPACSPSCFPKRWKRLSPARWKAFAPPVPTSSKRSSTACCHR</sequence>
<feature type="chain" id="PRO_0000440701" description="Putative cryptic phosphonate transport system permease protein PhnE1">
    <location>
        <begin position="1"/>
        <end position="206"/>
    </location>
</feature>
<feature type="transmembrane region" description="Helical" evidence="1">
    <location>
        <begin position="30"/>
        <end position="50"/>
    </location>
</feature>
<feature type="transmembrane region" description="Helical" evidence="1">
    <location>
        <begin position="92"/>
        <end position="112"/>
    </location>
</feature>
<feature type="transmembrane region" description="Helical" evidence="1">
    <location>
        <begin position="137"/>
        <end position="157"/>
    </location>
</feature>
<accession>P0DP69</accession>
<accession>P16683</accession>
<accession>P76792</accession>
<accession>Q2M6K0</accession>
<accession>Q47479</accession>
<accession>Q47716</accession>
<gene>
    <name type="primary">phnE1</name>
    <name type="ordered locus">b4104</name>
    <name type="ordered locus">JW4065</name>
</gene>
<keyword id="KW-0997">Cell inner membrane</keyword>
<keyword id="KW-1003">Cell membrane</keyword>
<keyword id="KW-0472">Membrane</keyword>
<keyword id="KW-0918">Phosphonate transport</keyword>
<keyword id="KW-1185">Reference proteome</keyword>
<keyword id="KW-0812">Transmembrane</keyword>
<keyword id="KW-1133">Transmembrane helix</keyword>
<keyword id="KW-0813">Transport</keyword>
<organism>
    <name type="scientific">Escherichia coli (strain K12)</name>
    <dbReference type="NCBI Taxonomy" id="83333"/>
    <lineage>
        <taxon>Bacteria</taxon>
        <taxon>Pseudomonadati</taxon>
        <taxon>Pseudomonadota</taxon>
        <taxon>Gammaproteobacteria</taxon>
        <taxon>Enterobacterales</taxon>
        <taxon>Enterobacteriaceae</taxon>
        <taxon>Escherichia</taxon>
    </lineage>
</organism>